<protein>
    <recommendedName>
        <fullName evidence="1">Serine hydroxymethyltransferase</fullName>
        <shortName evidence="1">SHMT</shortName>
        <shortName evidence="1">Serine methylase</shortName>
        <ecNumber evidence="1">2.1.2.1</ecNumber>
    </recommendedName>
</protein>
<dbReference type="EC" id="2.1.2.1" evidence="1"/>
<dbReference type="EMBL" id="CU207211">
    <property type="protein sequence ID" value="CAL62511.1"/>
    <property type="molecule type" value="Genomic_DNA"/>
</dbReference>
<dbReference type="SMR" id="A4G7M4"/>
<dbReference type="STRING" id="204773.HEAR2380"/>
<dbReference type="KEGG" id="har:HEAR2380"/>
<dbReference type="eggNOG" id="COG0112">
    <property type="taxonomic scope" value="Bacteria"/>
</dbReference>
<dbReference type="HOGENOM" id="CLU_022477_2_1_4"/>
<dbReference type="OrthoDB" id="9803846at2"/>
<dbReference type="UniPathway" id="UPA00193"/>
<dbReference type="UniPathway" id="UPA00288">
    <property type="reaction ID" value="UER01023"/>
</dbReference>
<dbReference type="Proteomes" id="UP000006697">
    <property type="component" value="Chromosome"/>
</dbReference>
<dbReference type="GO" id="GO:0005829">
    <property type="term" value="C:cytosol"/>
    <property type="evidence" value="ECO:0007669"/>
    <property type="project" value="TreeGrafter"/>
</dbReference>
<dbReference type="GO" id="GO:0004372">
    <property type="term" value="F:glycine hydroxymethyltransferase activity"/>
    <property type="evidence" value="ECO:0007669"/>
    <property type="project" value="UniProtKB-UniRule"/>
</dbReference>
<dbReference type="GO" id="GO:0030170">
    <property type="term" value="F:pyridoxal phosphate binding"/>
    <property type="evidence" value="ECO:0007669"/>
    <property type="project" value="UniProtKB-UniRule"/>
</dbReference>
<dbReference type="GO" id="GO:0019264">
    <property type="term" value="P:glycine biosynthetic process from serine"/>
    <property type="evidence" value="ECO:0007669"/>
    <property type="project" value="UniProtKB-UniRule"/>
</dbReference>
<dbReference type="GO" id="GO:0035999">
    <property type="term" value="P:tetrahydrofolate interconversion"/>
    <property type="evidence" value="ECO:0007669"/>
    <property type="project" value="UniProtKB-UniRule"/>
</dbReference>
<dbReference type="CDD" id="cd00378">
    <property type="entry name" value="SHMT"/>
    <property type="match status" value="1"/>
</dbReference>
<dbReference type="FunFam" id="3.40.640.10:FF:000001">
    <property type="entry name" value="Serine hydroxymethyltransferase"/>
    <property type="match status" value="1"/>
</dbReference>
<dbReference type="FunFam" id="3.90.1150.10:FF:000003">
    <property type="entry name" value="Serine hydroxymethyltransferase"/>
    <property type="match status" value="1"/>
</dbReference>
<dbReference type="Gene3D" id="3.90.1150.10">
    <property type="entry name" value="Aspartate Aminotransferase, domain 1"/>
    <property type="match status" value="1"/>
</dbReference>
<dbReference type="Gene3D" id="3.40.640.10">
    <property type="entry name" value="Type I PLP-dependent aspartate aminotransferase-like (Major domain)"/>
    <property type="match status" value="1"/>
</dbReference>
<dbReference type="HAMAP" id="MF_00051">
    <property type="entry name" value="SHMT"/>
    <property type="match status" value="1"/>
</dbReference>
<dbReference type="InterPro" id="IPR015424">
    <property type="entry name" value="PyrdxlP-dep_Trfase"/>
</dbReference>
<dbReference type="InterPro" id="IPR015421">
    <property type="entry name" value="PyrdxlP-dep_Trfase_major"/>
</dbReference>
<dbReference type="InterPro" id="IPR015422">
    <property type="entry name" value="PyrdxlP-dep_Trfase_small"/>
</dbReference>
<dbReference type="InterPro" id="IPR001085">
    <property type="entry name" value="Ser_HO-MeTrfase"/>
</dbReference>
<dbReference type="InterPro" id="IPR049943">
    <property type="entry name" value="Ser_HO-MeTrfase-like"/>
</dbReference>
<dbReference type="InterPro" id="IPR019798">
    <property type="entry name" value="Ser_HO-MeTrfase_PLP_BS"/>
</dbReference>
<dbReference type="InterPro" id="IPR039429">
    <property type="entry name" value="SHMT-like_dom"/>
</dbReference>
<dbReference type="NCBIfam" id="NF000586">
    <property type="entry name" value="PRK00011.1"/>
    <property type="match status" value="1"/>
</dbReference>
<dbReference type="PANTHER" id="PTHR11680">
    <property type="entry name" value="SERINE HYDROXYMETHYLTRANSFERASE"/>
    <property type="match status" value="1"/>
</dbReference>
<dbReference type="PANTHER" id="PTHR11680:SF50">
    <property type="entry name" value="SERINE HYDROXYMETHYLTRANSFERASE"/>
    <property type="match status" value="1"/>
</dbReference>
<dbReference type="Pfam" id="PF00464">
    <property type="entry name" value="SHMT"/>
    <property type="match status" value="1"/>
</dbReference>
<dbReference type="PIRSF" id="PIRSF000412">
    <property type="entry name" value="SHMT"/>
    <property type="match status" value="1"/>
</dbReference>
<dbReference type="SUPFAM" id="SSF53383">
    <property type="entry name" value="PLP-dependent transferases"/>
    <property type="match status" value="1"/>
</dbReference>
<dbReference type="PROSITE" id="PS00096">
    <property type="entry name" value="SHMT"/>
    <property type="match status" value="1"/>
</dbReference>
<sequence length="414" mass="45188">MFSKDQTLAKTDTELWSAIQQENTRQQDHIELIASENYTSPAVMEAQGSQLTNKYAEGYPGKRYYGGCEYVDIVEQLAIDRVKKLFGAEAANVQPNSGSQANQGVFFAVLKPGDTIMGMSLAEGGHLTHGMALNMSGKWFNVVSYGLNDKEEIDYEQMERLAREHKPKMIIAGASAYALRIDFERFAKIAKEIGAYFMVDMAHYAGLIAAGEYPNPVPYADFVTSTTHKSLRGPRGGFILMKAEHEKIINSAIFPGIQGGPLMHVIAGKAVAFKEALAPEFKVYQQQVLKNADALAKALIARGLRIVSNRTESHVMLVDLRAKKITGKDAEALLGSAHITTNKNGIPNDPEKPFVSSGIRLGSPAMTTRGFKEAEATKVGNLIADVLDNPNDAATIERVKAEVKKLTDAFPVYG</sequence>
<accession>A4G7M4</accession>
<name>GLYA_HERAR</name>
<evidence type="ECO:0000255" key="1">
    <source>
        <dbReference type="HAMAP-Rule" id="MF_00051"/>
    </source>
</evidence>
<keyword id="KW-0028">Amino-acid biosynthesis</keyword>
<keyword id="KW-0963">Cytoplasm</keyword>
<keyword id="KW-0554">One-carbon metabolism</keyword>
<keyword id="KW-0663">Pyridoxal phosphate</keyword>
<keyword id="KW-1185">Reference proteome</keyword>
<keyword id="KW-0808">Transferase</keyword>
<comment type="function">
    <text evidence="1">Catalyzes the reversible interconversion of serine and glycine with tetrahydrofolate (THF) serving as the one-carbon carrier. This reaction serves as the major source of one-carbon groups required for the biosynthesis of purines, thymidylate, methionine, and other important biomolecules. Also exhibits THF-independent aldolase activity toward beta-hydroxyamino acids, producing glycine and aldehydes, via a retro-aldol mechanism.</text>
</comment>
<comment type="catalytic activity">
    <reaction evidence="1">
        <text>(6R)-5,10-methylene-5,6,7,8-tetrahydrofolate + glycine + H2O = (6S)-5,6,7,8-tetrahydrofolate + L-serine</text>
        <dbReference type="Rhea" id="RHEA:15481"/>
        <dbReference type="ChEBI" id="CHEBI:15377"/>
        <dbReference type="ChEBI" id="CHEBI:15636"/>
        <dbReference type="ChEBI" id="CHEBI:33384"/>
        <dbReference type="ChEBI" id="CHEBI:57305"/>
        <dbReference type="ChEBI" id="CHEBI:57453"/>
        <dbReference type="EC" id="2.1.2.1"/>
    </reaction>
</comment>
<comment type="cofactor">
    <cofactor evidence="1">
        <name>pyridoxal 5'-phosphate</name>
        <dbReference type="ChEBI" id="CHEBI:597326"/>
    </cofactor>
</comment>
<comment type="pathway">
    <text evidence="1">One-carbon metabolism; tetrahydrofolate interconversion.</text>
</comment>
<comment type="pathway">
    <text evidence="1">Amino-acid biosynthesis; glycine biosynthesis; glycine from L-serine: step 1/1.</text>
</comment>
<comment type="subunit">
    <text evidence="1">Homodimer.</text>
</comment>
<comment type="subcellular location">
    <subcellularLocation>
        <location evidence="1">Cytoplasm</location>
    </subcellularLocation>
</comment>
<comment type="similarity">
    <text evidence="1">Belongs to the SHMT family.</text>
</comment>
<gene>
    <name evidence="1" type="primary">glyA</name>
    <name type="ordered locus">HEAR2380</name>
</gene>
<proteinExistence type="inferred from homology"/>
<organism>
    <name type="scientific">Herminiimonas arsenicoxydans</name>
    <dbReference type="NCBI Taxonomy" id="204773"/>
    <lineage>
        <taxon>Bacteria</taxon>
        <taxon>Pseudomonadati</taxon>
        <taxon>Pseudomonadota</taxon>
        <taxon>Betaproteobacteria</taxon>
        <taxon>Burkholderiales</taxon>
        <taxon>Oxalobacteraceae</taxon>
        <taxon>Herminiimonas</taxon>
    </lineage>
</organism>
<reference key="1">
    <citation type="journal article" date="2007" name="PLoS Genet.">
        <title>A tale of two oxidation states: bacterial colonization of arsenic-rich environments.</title>
        <authorList>
            <person name="Muller D."/>
            <person name="Medigue C."/>
            <person name="Koechler S."/>
            <person name="Barbe V."/>
            <person name="Barakat M."/>
            <person name="Talla E."/>
            <person name="Bonnefoy V."/>
            <person name="Krin E."/>
            <person name="Arsene-Ploetze F."/>
            <person name="Carapito C."/>
            <person name="Chandler M."/>
            <person name="Cournoyer B."/>
            <person name="Cruveiller S."/>
            <person name="Dossat C."/>
            <person name="Duval S."/>
            <person name="Heymann M."/>
            <person name="Leize E."/>
            <person name="Lieutaud A."/>
            <person name="Lievremont D."/>
            <person name="Makita Y."/>
            <person name="Mangenot S."/>
            <person name="Nitschke W."/>
            <person name="Ortet P."/>
            <person name="Perdrial N."/>
            <person name="Schoepp B."/>
            <person name="Siguier P."/>
            <person name="Simeonova D.D."/>
            <person name="Rouy Z."/>
            <person name="Segurens B."/>
            <person name="Turlin E."/>
            <person name="Vallenet D."/>
            <person name="van Dorsselaer A."/>
            <person name="Weiss S."/>
            <person name="Weissenbach J."/>
            <person name="Lett M.-C."/>
            <person name="Danchin A."/>
            <person name="Bertin P.N."/>
        </authorList>
    </citation>
    <scope>NUCLEOTIDE SEQUENCE [LARGE SCALE GENOMIC DNA]</scope>
    <source>
        <strain>ULPAs1</strain>
    </source>
</reference>
<feature type="chain" id="PRO_1000006264" description="Serine hydroxymethyltransferase">
    <location>
        <begin position="1"/>
        <end position="414"/>
    </location>
</feature>
<feature type="binding site" evidence="1">
    <location>
        <position position="121"/>
    </location>
    <ligand>
        <name>(6S)-5,6,7,8-tetrahydrofolate</name>
        <dbReference type="ChEBI" id="CHEBI:57453"/>
    </ligand>
</feature>
<feature type="binding site" evidence="1">
    <location>
        <begin position="125"/>
        <end position="127"/>
    </location>
    <ligand>
        <name>(6S)-5,6,7,8-tetrahydrofolate</name>
        <dbReference type="ChEBI" id="CHEBI:57453"/>
    </ligand>
</feature>
<feature type="site" description="Plays an important role in substrate specificity" evidence="1">
    <location>
        <position position="228"/>
    </location>
</feature>
<feature type="modified residue" description="N6-(pyridoxal phosphate)lysine" evidence="1">
    <location>
        <position position="229"/>
    </location>
</feature>